<sequence>MTPLQILISNDDGVLAEGVRCLAAAAASRGHRVTVVCPDHERSATGHGLTIHTPIRAERVDELYGPGVKAWSCSGTPADCVKLALSELLAEKPDLVLSGVNHGPNLGTDVFCSGTVAAAMEGTLEGLPALAVSVACFQWRDFQAAAQLAMDVAENALADHWPNNLLLNLNIPPCHLEQMGSLRWTRLSIRHYEEQFSRRVDPHSRTYFWLAGEVVKDLETAGDGPRDWPSDVAQIETNSPSLTPIQPDLFWRGDLSALPAACVANQPVR</sequence>
<evidence type="ECO:0000255" key="1">
    <source>
        <dbReference type="HAMAP-Rule" id="MF_00060"/>
    </source>
</evidence>
<reference key="1">
    <citation type="journal article" date="2003" name="Nature">
        <title>Genome divergence in two Prochlorococcus ecotypes reflects oceanic niche differentiation.</title>
        <authorList>
            <person name="Rocap G."/>
            <person name="Larimer F.W."/>
            <person name="Lamerdin J.E."/>
            <person name="Malfatti S."/>
            <person name="Chain P."/>
            <person name="Ahlgren N.A."/>
            <person name="Arellano A."/>
            <person name="Coleman M."/>
            <person name="Hauser L."/>
            <person name="Hess W.R."/>
            <person name="Johnson Z.I."/>
            <person name="Land M.L."/>
            <person name="Lindell D."/>
            <person name="Post A.F."/>
            <person name="Regala W."/>
            <person name="Shah M."/>
            <person name="Shaw S.L."/>
            <person name="Steglich C."/>
            <person name="Sullivan M.B."/>
            <person name="Ting C.S."/>
            <person name="Tolonen A."/>
            <person name="Webb E.A."/>
            <person name="Zinser E.R."/>
            <person name="Chisholm S.W."/>
        </authorList>
    </citation>
    <scope>NUCLEOTIDE SEQUENCE [LARGE SCALE GENOMIC DNA]</scope>
    <source>
        <strain>MIT 9313</strain>
    </source>
</reference>
<dbReference type="EC" id="3.1.3.5" evidence="1"/>
<dbReference type="EMBL" id="BX548175">
    <property type="protein sequence ID" value="CAE20541.1"/>
    <property type="molecule type" value="Genomic_DNA"/>
</dbReference>
<dbReference type="RefSeq" id="WP_011129745.1">
    <property type="nucleotide sequence ID" value="NC_005071.1"/>
</dbReference>
<dbReference type="SMR" id="Q7V8I0"/>
<dbReference type="KEGG" id="pmt:PMT_0366"/>
<dbReference type="eggNOG" id="COG0496">
    <property type="taxonomic scope" value="Bacteria"/>
</dbReference>
<dbReference type="HOGENOM" id="CLU_045192_1_3_3"/>
<dbReference type="OrthoDB" id="9780815at2"/>
<dbReference type="Proteomes" id="UP000001423">
    <property type="component" value="Chromosome"/>
</dbReference>
<dbReference type="GO" id="GO:0005737">
    <property type="term" value="C:cytoplasm"/>
    <property type="evidence" value="ECO:0007669"/>
    <property type="project" value="UniProtKB-SubCell"/>
</dbReference>
<dbReference type="GO" id="GO:0008254">
    <property type="term" value="F:3'-nucleotidase activity"/>
    <property type="evidence" value="ECO:0007669"/>
    <property type="project" value="TreeGrafter"/>
</dbReference>
<dbReference type="GO" id="GO:0008253">
    <property type="term" value="F:5'-nucleotidase activity"/>
    <property type="evidence" value="ECO:0007669"/>
    <property type="project" value="UniProtKB-UniRule"/>
</dbReference>
<dbReference type="GO" id="GO:0004309">
    <property type="term" value="F:exopolyphosphatase activity"/>
    <property type="evidence" value="ECO:0007669"/>
    <property type="project" value="TreeGrafter"/>
</dbReference>
<dbReference type="GO" id="GO:0046872">
    <property type="term" value="F:metal ion binding"/>
    <property type="evidence" value="ECO:0007669"/>
    <property type="project" value="UniProtKB-UniRule"/>
</dbReference>
<dbReference type="GO" id="GO:0000166">
    <property type="term" value="F:nucleotide binding"/>
    <property type="evidence" value="ECO:0007669"/>
    <property type="project" value="UniProtKB-KW"/>
</dbReference>
<dbReference type="Gene3D" id="3.40.1210.10">
    <property type="entry name" value="Survival protein SurE-like phosphatase/nucleotidase"/>
    <property type="match status" value="1"/>
</dbReference>
<dbReference type="HAMAP" id="MF_00060">
    <property type="entry name" value="SurE"/>
    <property type="match status" value="1"/>
</dbReference>
<dbReference type="InterPro" id="IPR030048">
    <property type="entry name" value="SurE"/>
</dbReference>
<dbReference type="InterPro" id="IPR002828">
    <property type="entry name" value="SurE-like_Pase/nucleotidase"/>
</dbReference>
<dbReference type="InterPro" id="IPR036523">
    <property type="entry name" value="SurE-like_sf"/>
</dbReference>
<dbReference type="NCBIfam" id="NF001490">
    <property type="entry name" value="PRK00346.1-4"/>
    <property type="match status" value="1"/>
</dbReference>
<dbReference type="NCBIfam" id="NF001492">
    <property type="entry name" value="PRK00346.2-2"/>
    <property type="match status" value="1"/>
</dbReference>
<dbReference type="NCBIfam" id="TIGR00087">
    <property type="entry name" value="surE"/>
    <property type="match status" value="1"/>
</dbReference>
<dbReference type="PANTHER" id="PTHR30457">
    <property type="entry name" value="5'-NUCLEOTIDASE SURE"/>
    <property type="match status" value="1"/>
</dbReference>
<dbReference type="PANTHER" id="PTHR30457:SF12">
    <property type="entry name" value="5'_3'-NUCLEOTIDASE SURE"/>
    <property type="match status" value="1"/>
</dbReference>
<dbReference type="Pfam" id="PF01975">
    <property type="entry name" value="SurE"/>
    <property type="match status" value="1"/>
</dbReference>
<dbReference type="SUPFAM" id="SSF64167">
    <property type="entry name" value="SurE-like"/>
    <property type="match status" value="1"/>
</dbReference>
<organism>
    <name type="scientific">Prochlorococcus marinus (strain MIT 9313)</name>
    <dbReference type="NCBI Taxonomy" id="74547"/>
    <lineage>
        <taxon>Bacteria</taxon>
        <taxon>Bacillati</taxon>
        <taxon>Cyanobacteriota</taxon>
        <taxon>Cyanophyceae</taxon>
        <taxon>Synechococcales</taxon>
        <taxon>Prochlorococcaceae</taxon>
        <taxon>Prochlorococcus</taxon>
    </lineage>
</organism>
<feature type="chain" id="PRO_0000111829" description="5'-nucleotidase SurE">
    <location>
        <begin position="1"/>
        <end position="269"/>
    </location>
</feature>
<feature type="binding site" evidence="1">
    <location>
        <position position="11"/>
    </location>
    <ligand>
        <name>a divalent metal cation</name>
        <dbReference type="ChEBI" id="CHEBI:60240"/>
    </ligand>
</feature>
<feature type="binding site" evidence="1">
    <location>
        <position position="12"/>
    </location>
    <ligand>
        <name>a divalent metal cation</name>
        <dbReference type="ChEBI" id="CHEBI:60240"/>
    </ligand>
</feature>
<feature type="binding site" evidence="1">
    <location>
        <position position="43"/>
    </location>
    <ligand>
        <name>a divalent metal cation</name>
        <dbReference type="ChEBI" id="CHEBI:60240"/>
    </ligand>
</feature>
<feature type="binding site" evidence="1">
    <location>
        <position position="101"/>
    </location>
    <ligand>
        <name>a divalent metal cation</name>
        <dbReference type="ChEBI" id="CHEBI:60240"/>
    </ligand>
</feature>
<protein>
    <recommendedName>
        <fullName evidence="1">5'-nucleotidase SurE</fullName>
        <ecNumber evidence="1">3.1.3.5</ecNumber>
    </recommendedName>
    <alternativeName>
        <fullName evidence="1">Nucleoside 5'-monophosphate phosphohydrolase</fullName>
    </alternativeName>
</protein>
<name>SURE_PROMM</name>
<comment type="function">
    <text evidence="1">Nucleotidase that shows phosphatase activity on nucleoside 5'-monophosphates.</text>
</comment>
<comment type="catalytic activity">
    <reaction evidence="1">
        <text>a ribonucleoside 5'-phosphate + H2O = a ribonucleoside + phosphate</text>
        <dbReference type="Rhea" id="RHEA:12484"/>
        <dbReference type="ChEBI" id="CHEBI:15377"/>
        <dbReference type="ChEBI" id="CHEBI:18254"/>
        <dbReference type="ChEBI" id="CHEBI:43474"/>
        <dbReference type="ChEBI" id="CHEBI:58043"/>
        <dbReference type="EC" id="3.1.3.5"/>
    </reaction>
</comment>
<comment type="cofactor">
    <cofactor evidence="1">
        <name>a divalent metal cation</name>
        <dbReference type="ChEBI" id="CHEBI:60240"/>
    </cofactor>
    <text evidence="1">Binds 1 divalent metal cation per subunit.</text>
</comment>
<comment type="subcellular location">
    <subcellularLocation>
        <location evidence="1">Cytoplasm</location>
    </subcellularLocation>
</comment>
<comment type="similarity">
    <text evidence="1">Belongs to the SurE nucleotidase family.</text>
</comment>
<accession>Q7V8I0</accession>
<gene>
    <name evidence="1" type="primary">surE</name>
    <name type="ordered locus">PMT_0366</name>
</gene>
<keyword id="KW-0963">Cytoplasm</keyword>
<keyword id="KW-0378">Hydrolase</keyword>
<keyword id="KW-0479">Metal-binding</keyword>
<keyword id="KW-0547">Nucleotide-binding</keyword>
<keyword id="KW-1185">Reference proteome</keyword>
<proteinExistence type="inferred from homology"/>